<comment type="function">
    <text evidence="2">Exhibits ATP hydrolysis without substrate. Phosphorylates D-ribulose.</text>
</comment>
<comment type="catalytic activity">
    <reaction evidence="2">
        <text>D-ribulose + ATP = D-ribulose 5-phosphate + ADP + H(+)</text>
        <dbReference type="Rhea" id="RHEA:17601"/>
        <dbReference type="ChEBI" id="CHEBI:15378"/>
        <dbReference type="ChEBI" id="CHEBI:17173"/>
        <dbReference type="ChEBI" id="CHEBI:30616"/>
        <dbReference type="ChEBI" id="CHEBI:58121"/>
        <dbReference type="ChEBI" id="CHEBI:456216"/>
        <dbReference type="EC" id="2.7.1.47"/>
    </reaction>
</comment>
<comment type="cofactor">
    <cofactor evidence="1">
        <name>a divalent metal cation</name>
        <dbReference type="ChEBI" id="CHEBI:60240"/>
    </cofactor>
</comment>
<comment type="similarity">
    <text evidence="4">Belongs to the FGGY kinase family.</text>
</comment>
<sequence>MVVALGLDFGTSGARAIACDFDSDRSVSVSVTFPKTSQNWPQVWREALWQLLTQIPADWRSRIERIAIDGTSGTVLLCDREGQPQTEPLLYNQACPIDLADLADWVPADHAALSSTSSLAKLWFWQQQFGALPPDWQILAQADWLSLQLHGCSQQSDYHNALKLGYSPDRERFSKNLLDSELGALLPVVHEPGVAIGPILPAIAQEFGLSPDCQICAGTTDSIAAFLASGAHQPGEAVTSLGSTIVLKLLSQVAVSDRLTGVYSHKLGGYWLTGGASNCGGATLRQFFPDTELESLSCQIDPTKKSGLDYYPLPSRGERFPIADPDRLPQLEPRPENPVQFLQGLLEGLTQVETLGYQRLQDLGATPLKRIWTAGGGAKNAVWQQLRQQAIGVPIAIAPNTEAAFGTARLAAFGLAAFHSAGLKRT</sequence>
<reference key="1">
    <citation type="submission" date="2005-08" db="EMBL/GenBank/DDBJ databases">
        <title>Complete sequence of chromosome 1 of Synechococcus elongatus PCC 7942.</title>
        <authorList>
            <consortium name="US DOE Joint Genome Institute"/>
            <person name="Copeland A."/>
            <person name="Lucas S."/>
            <person name="Lapidus A."/>
            <person name="Barry K."/>
            <person name="Detter J.C."/>
            <person name="Glavina T."/>
            <person name="Hammon N."/>
            <person name="Israni S."/>
            <person name="Pitluck S."/>
            <person name="Schmutz J."/>
            <person name="Larimer F."/>
            <person name="Land M."/>
            <person name="Kyrpides N."/>
            <person name="Lykidis A."/>
            <person name="Golden S."/>
            <person name="Richardson P."/>
        </authorList>
    </citation>
    <scope>NUCLEOTIDE SEQUENCE [LARGE SCALE GENOMIC DNA]</scope>
    <source>
        <strain>ATCC 33912 / PCC 7942 / FACHB-805</strain>
    </source>
</reference>
<reference key="2">
    <citation type="journal article" date="2016" name="PLoS ONE">
        <title>Crystal structures of putative sugar kinases from Synechococcus elongatus PCC 7942 and Arabidopsis thaliana.</title>
        <authorList>
            <person name="Xie Y."/>
            <person name="Li M."/>
            <person name="Chang W."/>
        </authorList>
    </citation>
    <scope>X-RAY CRYSTALLOGRAPHY (1.96 ANGSTROMS) IN COMPLEX WITH ADP; ATP ANALOG AND SUBSTRATE</scope>
    <scope>FUNCTION</scope>
    <scope>MUTAGENESIS OF ASP-8; THR-11 AND ASP-221</scope>
    <source>
        <strain>ATCC 33912 / PCC 7942 / FACHB-805</strain>
    </source>
</reference>
<keyword id="KW-0002">3D-structure</keyword>
<keyword id="KW-0067">ATP-binding</keyword>
<keyword id="KW-0418">Kinase</keyword>
<keyword id="KW-0547">Nucleotide-binding</keyword>
<keyword id="KW-1185">Reference proteome</keyword>
<keyword id="KW-0808">Transferase</keyword>
<feature type="chain" id="PRO_0000443301" description="D-ribulose kinase">
    <location>
        <begin position="1"/>
        <end position="426"/>
    </location>
</feature>
<feature type="binding site" evidence="2 9">
    <location>
        <position position="8"/>
    </location>
    <ligand>
        <name>substrate</name>
    </ligand>
</feature>
<feature type="binding site" evidence="2 9">
    <location>
        <begin position="12"/>
        <end position="15"/>
    </location>
    <ligand>
        <name>substrate</name>
    </ligand>
</feature>
<feature type="binding site" evidence="2 9">
    <location>
        <position position="72"/>
    </location>
    <ligand>
        <name>substrate</name>
    </ligand>
</feature>
<feature type="binding site" evidence="2 9">
    <location>
        <position position="221"/>
    </location>
    <ligand>
        <name>substrate</name>
    </ligand>
</feature>
<feature type="binding site" evidence="2 7 8">
    <location>
        <position position="243"/>
    </location>
    <ligand>
        <name>ATP</name>
        <dbReference type="ChEBI" id="CHEBI:30616"/>
    </ligand>
</feature>
<feature type="binding site" evidence="2 7 8">
    <location>
        <position position="281"/>
    </location>
    <ligand>
        <name>ATP</name>
        <dbReference type="ChEBI" id="CHEBI:30616"/>
    </ligand>
</feature>
<feature type="binding site" evidence="2 7 8">
    <location>
        <begin position="376"/>
        <end position="380"/>
    </location>
    <ligand>
        <name>ATP</name>
        <dbReference type="ChEBI" id="CHEBI:30616"/>
    </ligand>
</feature>
<feature type="mutagenesis site" description="Reduced ATP hydrolysis in the presence of D-ribulose." evidence="2">
    <original>D</original>
    <variation>A</variation>
    <location>
        <position position="8"/>
    </location>
</feature>
<feature type="mutagenesis site" description="Reduced ATP hydrolysis in the presence of D-ribulose." evidence="2">
    <original>T</original>
    <variation>A</variation>
    <location>
        <position position="11"/>
    </location>
</feature>
<feature type="mutagenesis site" description="Reduced ATP hydrolysis in the presence of D-ribulose." evidence="2">
    <original>D</original>
    <variation>A</variation>
    <location>
        <position position="221"/>
    </location>
</feature>
<feature type="strand" evidence="10">
    <location>
        <begin position="3"/>
        <end position="9"/>
    </location>
</feature>
<feature type="strand" evidence="10">
    <location>
        <begin position="11"/>
        <end position="20"/>
    </location>
</feature>
<feature type="turn" evidence="10">
    <location>
        <begin position="21"/>
        <end position="24"/>
    </location>
</feature>
<feature type="strand" evidence="10">
    <location>
        <begin position="25"/>
        <end position="32"/>
    </location>
</feature>
<feature type="helix" evidence="10">
    <location>
        <begin position="40"/>
        <end position="54"/>
    </location>
</feature>
<feature type="helix" evidence="10">
    <location>
        <begin position="57"/>
        <end position="60"/>
    </location>
</feature>
<feature type="strand" evidence="10">
    <location>
        <begin position="65"/>
        <end position="70"/>
    </location>
</feature>
<feature type="strand" evidence="10">
    <location>
        <begin position="75"/>
        <end position="78"/>
    </location>
</feature>
<feature type="strand" evidence="10">
    <location>
        <begin position="84"/>
        <end position="86"/>
    </location>
</feature>
<feature type="helix" evidence="10">
    <location>
        <begin position="99"/>
        <end position="102"/>
    </location>
</feature>
<feature type="turn" evidence="10">
    <location>
        <begin position="103"/>
        <end position="105"/>
    </location>
</feature>
<feature type="helix" evidence="10">
    <location>
        <begin position="118"/>
        <end position="129"/>
    </location>
</feature>
<feature type="strand" evidence="10">
    <location>
        <begin position="137"/>
        <end position="140"/>
    </location>
</feature>
<feature type="helix" evidence="10">
    <location>
        <begin position="141"/>
        <end position="150"/>
    </location>
</feature>
<feature type="strand" evidence="10">
    <location>
        <begin position="153"/>
        <end position="157"/>
    </location>
</feature>
<feature type="turn" evidence="10">
    <location>
        <begin position="158"/>
        <end position="161"/>
    </location>
</feature>
<feature type="helix" evidence="10">
    <location>
        <begin position="162"/>
        <end position="164"/>
    </location>
</feature>
<feature type="turn" evidence="10">
    <location>
        <begin position="168"/>
        <end position="171"/>
    </location>
</feature>
<feature type="helix" evidence="10">
    <location>
        <begin position="175"/>
        <end position="178"/>
    </location>
</feature>
<feature type="strand" evidence="11">
    <location>
        <begin position="180"/>
        <end position="182"/>
    </location>
</feature>
<feature type="helix" evidence="10">
    <location>
        <begin position="183"/>
        <end position="185"/>
    </location>
</feature>
<feature type="strand" evidence="10">
    <location>
        <begin position="188"/>
        <end position="190"/>
    </location>
</feature>
<feature type="strand" evidence="10">
    <location>
        <begin position="194"/>
        <end position="198"/>
    </location>
</feature>
<feature type="helix" evidence="10">
    <location>
        <begin position="201"/>
        <end position="207"/>
    </location>
</feature>
<feature type="strand" evidence="10">
    <location>
        <begin position="214"/>
        <end position="216"/>
    </location>
</feature>
<feature type="helix" evidence="10">
    <location>
        <begin position="221"/>
        <end position="229"/>
    </location>
</feature>
<feature type="strand" evidence="10">
    <location>
        <begin position="236"/>
        <end position="253"/>
    </location>
</feature>
<feature type="helix" evidence="10">
    <location>
        <begin position="258"/>
        <end position="260"/>
    </location>
</feature>
<feature type="strand" evidence="10">
    <location>
        <begin position="264"/>
        <end position="267"/>
    </location>
</feature>
<feature type="strand" evidence="10">
    <location>
        <begin position="270"/>
        <end position="276"/>
    </location>
</feature>
<feature type="helix" evidence="10">
    <location>
        <begin position="281"/>
        <end position="287"/>
    </location>
</feature>
<feature type="helix" evidence="10">
    <location>
        <begin position="290"/>
        <end position="297"/>
    </location>
</feature>
<feature type="strand" evidence="10">
    <location>
        <begin position="314"/>
        <end position="316"/>
    </location>
</feature>
<feature type="strand" evidence="10">
    <location>
        <begin position="320"/>
        <end position="322"/>
    </location>
</feature>
<feature type="helix" evidence="10">
    <location>
        <begin position="338"/>
        <end position="362"/>
    </location>
</feature>
<feature type="strand" evidence="10">
    <location>
        <begin position="370"/>
        <end position="375"/>
    </location>
</feature>
<feature type="turn" evidence="10">
    <location>
        <begin position="376"/>
        <end position="379"/>
    </location>
</feature>
<feature type="helix" evidence="10">
    <location>
        <begin position="381"/>
        <end position="391"/>
    </location>
</feature>
<feature type="strand" evidence="10">
    <location>
        <begin position="395"/>
        <end position="397"/>
    </location>
</feature>
<feature type="helix" evidence="10">
    <location>
        <begin position="403"/>
        <end position="413"/>
    </location>
</feature>
<feature type="turn" evidence="10">
    <location>
        <begin position="414"/>
        <end position="417"/>
    </location>
</feature>
<feature type="helix" evidence="10">
    <location>
        <begin position="420"/>
        <end position="422"/>
    </location>
</feature>
<protein>
    <recommendedName>
        <fullName evidence="5">D-ribulose kinase</fullName>
        <shortName evidence="4">D-ribulokinase</shortName>
        <ecNumber evidence="2">2.7.1.47</ecNumber>
    </recommendedName>
    <alternativeName>
        <fullName evidence="3">Probable sugar kinase</fullName>
        <shortName evidence="3">SePSK</shortName>
    </alternativeName>
</protein>
<evidence type="ECO:0000250" key="1">
    <source>
        <dbReference type="UniProtKB" id="P11553"/>
    </source>
</evidence>
<evidence type="ECO:0000269" key="2">
    <source>
    </source>
</evidence>
<evidence type="ECO:0000303" key="3">
    <source>
    </source>
</evidence>
<evidence type="ECO:0000305" key="4"/>
<evidence type="ECO:0000305" key="5">
    <source>
    </source>
</evidence>
<evidence type="ECO:0000312" key="6">
    <source>
        <dbReference type="EMBL" id="ABB58492.1"/>
    </source>
</evidence>
<evidence type="ECO:0007744" key="7">
    <source>
        <dbReference type="PDB" id="5HTP"/>
    </source>
</evidence>
<evidence type="ECO:0007744" key="8">
    <source>
        <dbReference type="PDB" id="5HUX"/>
    </source>
</evidence>
<evidence type="ECO:0007744" key="9">
    <source>
        <dbReference type="PDB" id="5HV7"/>
    </source>
</evidence>
<evidence type="ECO:0007829" key="10">
    <source>
        <dbReference type="PDB" id="5HUX"/>
    </source>
</evidence>
<evidence type="ECO:0007829" key="11">
    <source>
        <dbReference type="PDB" id="5HV7"/>
    </source>
</evidence>
<accession>Q31KC7</accession>
<proteinExistence type="evidence at protein level"/>
<dbReference type="EC" id="2.7.1.47" evidence="2"/>
<dbReference type="EMBL" id="CP000100">
    <property type="protein sequence ID" value="ABB58492.1"/>
    <property type="molecule type" value="Genomic_DNA"/>
</dbReference>
<dbReference type="RefSeq" id="WP_011378475.1">
    <property type="nucleotide sequence ID" value="NZ_JACJTX010000001.1"/>
</dbReference>
<dbReference type="PDB" id="5HTJ">
    <property type="method" value="X-ray"/>
    <property type="resolution" value="2.00 A"/>
    <property type="chains" value="A=1-426"/>
</dbReference>
<dbReference type="PDB" id="5HTN">
    <property type="method" value="X-ray"/>
    <property type="resolution" value="2.30 A"/>
    <property type="chains" value="A=1-426"/>
</dbReference>
<dbReference type="PDB" id="5HTP">
    <property type="method" value="X-ray"/>
    <property type="resolution" value="2.30 A"/>
    <property type="chains" value="A=1-426"/>
</dbReference>
<dbReference type="PDB" id="5HTY">
    <property type="method" value="X-ray"/>
    <property type="resolution" value="2.81 A"/>
    <property type="chains" value="A=1-426"/>
</dbReference>
<dbReference type="PDB" id="5HU2">
    <property type="method" value="X-ray"/>
    <property type="resolution" value="2.60 A"/>
    <property type="chains" value="A=1-426"/>
</dbReference>
<dbReference type="PDB" id="5HUX">
    <property type="method" value="X-ray"/>
    <property type="resolution" value="1.96 A"/>
    <property type="chains" value="A=1-426"/>
</dbReference>
<dbReference type="PDB" id="5HV7">
    <property type="method" value="X-ray"/>
    <property type="resolution" value="2.35 A"/>
    <property type="chains" value="A=1-426"/>
</dbReference>
<dbReference type="PDBsum" id="5HTJ"/>
<dbReference type="PDBsum" id="5HTN"/>
<dbReference type="PDBsum" id="5HTP"/>
<dbReference type="PDBsum" id="5HTY"/>
<dbReference type="PDBsum" id="5HU2"/>
<dbReference type="PDBsum" id="5HUX"/>
<dbReference type="PDBsum" id="5HV7"/>
<dbReference type="SMR" id="Q31KC7"/>
<dbReference type="STRING" id="1140.Synpcc7942_2462"/>
<dbReference type="PaxDb" id="1140-Synpcc7942_2462"/>
<dbReference type="KEGG" id="syf:Synpcc7942_2462"/>
<dbReference type="eggNOG" id="COG1070">
    <property type="taxonomic scope" value="Bacteria"/>
</dbReference>
<dbReference type="HOGENOM" id="CLU_009281_0_0_3"/>
<dbReference type="OrthoDB" id="9805576at2"/>
<dbReference type="BioCyc" id="SYNEL:SYNPCC7942_2462-MONOMER"/>
<dbReference type="EvolutionaryTrace" id="Q31KC7"/>
<dbReference type="Proteomes" id="UP000889800">
    <property type="component" value="Chromosome"/>
</dbReference>
<dbReference type="GO" id="GO:0005829">
    <property type="term" value="C:cytosol"/>
    <property type="evidence" value="ECO:0007669"/>
    <property type="project" value="TreeGrafter"/>
</dbReference>
<dbReference type="GO" id="GO:0005524">
    <property type="term" value="F:ATP binding"/>
    <property type="evidence" value="ECO:0000314"/>
    <property type="project" value="UniProtKB"/>
</dbReference>
<dbReference type="GO" id="GO:0019150">
    <property type="term" value="F:D-ribulokinase activity"/>
    <property type="evidence" value="ECO:0000314"/>
    <property type="project" value="UniProtKB"/>
</dbReference>
<dbReference type="GO" id="GO:0004856">
    <property type="term" value="F:D-xylulokinase activity"/>
    <property type="evidence" value="ECO:0007669"/>
    <property type="project" value="TreeGrafter"/>
</dbReference>
<dbReference type="GO" id="GO:0005997">
    <property type="term" value="P:xylulose metabolic process"/>
    <property type="evidence" value="ECO:0007669"/>
    <property type="project" value="TreeGrafter"/>
</dbReference>
<dbReference type="CDD" id="cd07783">
    <property type="entry name" value="ASKHA_NBD_FGGY_SePSK_AtXK1-like"/>
    <property type="match status" value="1"/>
</dbReference>
<dbReference type="FunFam" id="3.30.420.40:FF:000180">
    <property type="entry name" value="D-ribulose kinase isoform X1"/>
    <property type="match status" value="1"/>
</dbReference>
<dbReference type="Gene3D" id="3.30.420.40">
    <property type="match status" value="2"/>
</dbReference>
<dbReference type="InterPro" id="IPR043129">
    <property type="entry name" value="ATPase_NBD"/>
</dbReference>
<dbReference type="InterPro" id="IPR018485">
    <property type="entry name" value="FGGY_C"/>
</dbReference>
<dbReference type="PANTHER" id="PTHR10196:SF80">
    <property type="entry name" value="D-RIBULOSE KINASE"/>
    <property type="match status" value="1"/>
</dbReference>
<dbReference type="PANTHER" id="PTHR10196">
    <property type="entry name" value="SUGAR KINASE"/>
    <property type="match status" value="1"/>
</dbReference>
<dbReference type="Pfam" id="PF02782">
    <property type="entry name" value="FGGY_C"/>
    <property type="match status" value="1"/>
</dbReference>
<dbReference type="SUPFAM" id="SSF53067">
    <property type="entry name" value="Actin-like ATPase domain"/>
    <property type="match status" value="2"/>
</dbReference>
<gene>
    <name evidence="3" type="primary">PSK</name>
    <name evidence="6" type="ordered locus">Synpcc7942_2462</name>
</gene>
<organism>
    <name type="scientific">Synechococcus elongatus (strain ATCC 33912 / PCC 7942 / FACHB-805)</name>
    <name type="common">Anacystis nidulans R2</name>
    <dbReference type="NCBI Taxonomy" id="1140"/>
    <lineage>
        <taxon>Bacteria</taxon>
        <taxon>Bacillati</taxon>
        <taxon>Cyanobacteriota</taxon>
        <taxon>Cyanophyceae</taxon>
        <taxon>Synechococcales</taxon>
        <taxon>Synechococcaceae</taxon>
        <taxon>Synechococcus</taxon>
    </lineage>
</organism>
<name>PSK_SYNE7</name>